<feature type="chain" id="PRO_0000250920" description="NADH-quinone oxidoreductase subunit I 2">
    <location>
        <begin position="1"/>
        <end position="162"/>
    </location>
</feature>
<feature type="domain" description="4Fe-4S ferredoxin-type 1" evidence="1">
    <location>
        <begin position="53"/>
        <end position="83"/>
    </location>
</feature>
<feature type="domain" description="4Fe-4S ferredoxin-type 2" evidence="1">
    <location>
        <begin position="93"/>
        <end position="122"/>
    </location>
</feature>
<feature type="binding site" evidence="1">
    <location>
        <position position="63"/>
    </location>
    <ligand>
        <name>[4Fe-4S] cluster</name>
        <dbReference type="ChEBI" id="CHEBI:49883"/>
        <label>1</label>
    </ligand>
</feature>
<feature type="binding site" evidence="1">
    <location>
        <position position="66"/>
    </location>
    <ligand>
        <name>[4Fe-4S] cluster</name>
        <dbReference type="ChEBI" id="CHEBI:49883"/>
        <label>1</label>
    </ligand>
</feature>
<feature type="binding site" evidence="1">
    <location>
        <position position="69"/>
    </location>
    <ligand>
        <name>[4Fe-4S] cluster</name>
        <dbReference type="ChEBI" id="CHEBI:49883"/>
        <label>1</label>
    </ligand>
</feature>
<feature type="binding site" evidence="1">
    <location>
        <position position="73"/>
    </location>
    <ligand>
        <name>[4Fe-4S] cluster</name>
        <dbReference type="ChEBI" id="CHEBI:49883"/>
        <label>2</label>
    </ligand>
</feature>
<feature type="binding site" evidence="1">
    <location>
        <position position="102"/>
    </location>
    <ligand>
        <name>[4Fe-4S] cluster</name>
        <dbReference type="ChEBI" id="CHEBI:49883"/>
        <label>2</label>
    </ligand>
</feature>
<feature type="binding site" evidence="1">
    <location>
        <position position="105"/>
    </location>
    <ligand>
        <name>[4Fe-4S] cluster</name>
        <dbReference type="ChEBI" id="CHEBI:49883"/>
        <label>2</label>
    </ligand>
</feature>
<feature type="binding site" evidence="1">
    <location>
        <position position="108"/>
    </location>
    <ligand>
        <name>[4Fe-4S] cluster</name>
        <dbReference type="ChEBI" id="CHEBI:49883"/>
        <label>2</label>
    </ligand>
</feature>
<feature type="binding site" evidence="1">
    <location>
        <position position="112"/>
    </location>
    <ligand>
        <name>[4Fe-4S] cluster</name>
        <dbReference type="ChEBI" id="CHEBI:49883"/>
        <label>1</label>
    </ligand>
</feature>
<keyword id="KW-0004">4Fe-4S</keyword>
<keyword id="KW-0997">Cell inner membrane</keyword>
<keyword id="KW-1003">Cell membrane</keyword>
<keyword id="KW-0408">Iron</keyword>
<keyword id="KW-0411">Iron-sulfur</keyword>
<keyword id="KW-0472">Membrane</keyword>
<keyword id="KW-0479">Metal-binding</keyword>
<keyword id="KW-0520">NAD</keyword>
<keyword id="KW-0874">Quinone</keyword>
<keyword id="KW-1185">Reference proteome</keyword>
<keyword id="KW-0677">Repeat</keyword>
<keyword id="KW-1278">Translocase</keyword>
<keyword id="KW-0830">Ubiquinone</keyword>
<name>NUOI2_NITOC</name>
<dbReference type="EC" id="7.1.1.-" evidence="1"/>
<dbReference type="EMBL" id="CP000127">
    <property type="protein sequence ID" value="ABA59010.1"/>
    <property type="molecule type" value="Genomic_DNA"/>
</dbReference>
<dbReference type="SMR" id="Q3J836"/>
<dbReference type="STRING" id="323261.Noc_2557"/>
<dbReference type="KEGG" id="noc:Noc_2557"/>
<dbReference type="eggNOG" id="COG1143">
    <property type="taxonomic scope" value="Bacteria"/>
</dbReference>
<dbReference type="HOGENOM" id="CLU_067218_5_1_6"/>
<dbReference type="InParanoid" id="Q3J836"/>
<dbReference type="Proteomes" id="UP000006838">
    <property type="component" value="Chromosome"/>
</dbReference>
<dbReference type="GO" id="GO:0005886">
    <property type="term" value="C:plasma membrane"/>
    <property type="evidence" value="ECO:0007669"/>
    <property type="project" value="UniProtKB-SubCell"/>
</dbReference>
<dbReference type="GO" id="GO:0051539">
    <property type="term" value="F:4 iron, 4 sulfur cluster binding"/>
    <property type="evidence" value="ECO:0007669"/>
    <property type="project" value="UniProtKB-KW"/>
</dbReference>
<dbReference type="GO" id="GO:0005506">
    <property type="term" value="F:iron ion binding"/>
    <property type="evidence" value="ECO:0007669"/>
    <property type="project" value="UniProtKB-UniRule"/>
</dbReference>
<dbReference type="GO" id="GO:0050136">
    <property type="term" value="F:NADH:ubiquinone reductase (non-electrogenic) activity"/>
    <property type="evidence" value="ECO:0007669"/>
    <property type="project" value="UniProtKB-UniRule"/>
</dbReference>
<dbReference type="GO" id="GO:0048038">
    <property type="term" value="F:quinone binding"/>
    <property type="evidence" value="ECO:0007669"/>
    <property type="project" value="UniProtKB-KW"/>
</dbReference>
<dbReference type="GO" id="GO:0009060">
    <property type="term" value="P:aerobic respiration"/>
    <property type="evidence" value="ECO:0007669"/>
    <property type="project" value="TreeGrafter"/>
</dbReference>
<dbReference type="FunFam" id="3.30.70.3270:FF:000003">
    <property type="entry name" value="NADH-quinone oxidoreductase subunit I"/>
    <property type="match status" value="1"/>
</dbReference>
<dbReference type="Gene3D" id="3.30.70.3270">
    <property type="match status" value="1"/>
</dbReference>
<dbReference type="HAMAP" id="MF_01351">
    <property type="entry name" value="NDH1_NuoI"/>
    <property type="match status" value="1"/>
</dbReference>
<dbReference type="InterPro" id="IPR017896">
    <property type="entry name" value="4Fe4S_Fe-S-bd"/>
</dbReference>
<dbReference type="InterPro" id="IPR017900">
    <property type="entry name" value="4Fe4S_Fe_S_CS"/>
</dbReference>
<dbReference type="InterPro" id="IPR010226">
    <property type="entry name" value="NADH_quinone_OxRdtase_chainI"/>
</dbReference>
<dbReference type="NCBIfam" id="TIGR01971">
    <property type="entry name" value="NuoI"/>
    <property type="match status" value="1"/>
</dbReference>
<dbReference type="NCBIfam" id="NF004538">
    <property type="entry name" value="PRK05888.1-4"/>
    <property type="match status" value="1"/>
</dbReference>
<dbReference type="NCBIfam" id="NF004539">
    <property type="entry name" value="PRK05888.1-5"/>
    <property type="match status" value="1"/>
</dbReference>
<dbReference type="PANTHER" id="PTHR10849:SF20">
    <property type="entry name" value="NADH DEHYDROGENASE [UBIQUINONE] IRON-SULFUR PROTEIN 8, MITOCHONDRIAL"/>
    <property type="match status" value="1"/>
</dbReference>
<dbReference type="PANTHER" id="PTHR10849">
    <property type="entry name" value="NADH DEHYDROGENASE UBIQUINONE IRON-SULFUR PROTEIN 8, MITOCHONDRIAL"/>
    <property type="match status" value="1"/>
</dbReference>
<dbReference type="Pfam" id="PF12838">
    <property type="entry name" value="Fer4_7"/>
    <property type="match status" value="1"/>
</dbReference>
<dbReference type="SUPFAM" id="SSF54862">
    <property type="entry name" value="4Fe-4S ferredoxins"/>
    <property type="match status" value="1"/>
</dbReference>
<dbReference type="PROSITE" id="PS00198">
    <property type="entry name" value="4FE4S_FER_1"/>
    <property type="match status" value="2"/>
</dbReference>
<dbReference type="PROSITE" id="PS51379">
    <property type="entry name" value="4FE4S_FER_2"/>
    <property type="match status" value="2"/>
</dbReference>
<accession>Q3J836</accession>
<protein>
    <recommendedName>
        <fullName evidence="1">NADH-quinone oxidoreductase subunit I 2</fullName>
        <ecNumber evidence="1">7.1.1.-</ecNumber>
    </recommendedName>
    <alternativeName>
        <fullName evidence="1">NADH dehydrogenase I subunit I 2</fullName>
    </alternativeName>
    <alternativeName>
        <fullName evidence="1">NDH-1 subunit I 2</fullName>
    </alternativeName>
</protein>
<organism>
    <name type="scientific">Nitrosococcus oceani (strain ATCC 19707 / BCRC 17464 / JCM 30415 / NCIMB 11848 / C-107)</name>
    <dbReference type="NCBI Taxonomy" id="323261"/>
    <lineage>
        <taxon>Bacteria</taxon>
        <taxon>Pseudomonadati</taxon>
        <taxon>Pseudomonadota</taxon>
        <taxon>Gammaproteobacteria</taxon>
        <taxon>Chromatiales</taxon>
        <taxon>Chromatiaceae</taxon>
        <taxon>Nitrosococcus</taxon>
    </lineage>
</organism>
<gene>
    <name evidence="1" type="primary">nuoI2</name>
    <name type="ordered locus">Noc_2557</name>
</gene>
<sequence>MNTLRSYIKSFLLWELLLGLKLTGRYLFTKKVTVQFPEERTPQSPRFRGLHALRRYPNGEERCIACKLCEAVCPALAITIDSEQREDGTRRTTRYDIDLFKCIYCGFCEESCPVDSIVETRILDYHFEERGEHILHKEQLLALGDKYEAQIAADRAADAPYR</sequence>
<proteinExistence type="inferred from homology"/>
<evidence type="ECO:0000255" key="1">
    <source>
        <dbReference type="HAMAP-Rule" id="MF_01351"/>
    </source>
</evidence>
<reference key="1">
    <citation type="journal article" date="2006" name="Appl. Environ. Microbiol.">
        <title>Complete genome sequence of the marine, chemolithoautotrophic, ammonia-oxidizing bacterium Nitrosococcus oceani ATCC 19707.</title>
        <authorList>
            <person name="Klotz M.G."/>
            <person name="Arp D.J."/>
            <person name="Chain P.S.G."/>
            <person name="El-Sheikh A.F."/>
            <person name="Hauser L.J."/>
            <person name="Hommes N.G."/>
            <person name="Larimer F.W."/>
            <person name="Malfatti S.A."/>
            <person name="Norton J.M."/>
            <person name="Poret-Peterson A.T."/>
            <person name="Vergez L.M."/>
            <person name="Ward B.B."/>
        </authorList>
    </citation>
    <scope>NUCLEOTIDE SEQUENCE [LARGE SCALE GENOMIC DNA]</scope>
    <source>
        <strain>ATCC 19707 / BCRC 17464 / JCM 30415 / NCIMB 11848 / C-107</strain>
    </source>
</reference>
<comment type="function">
    <text evidence="1">NDH-1 shuttles electrons from NADH, via FMN and iron-sulfur (Fe-S) centers, to quinones in the respiratory chain. The immediate electron acceptor for the enzyme in this species is believed to be ubiquinone. Couples the redox reaction to proton translocation (for every two electrons transferred, four hydrogen ions are translocated across the cytoplasmic membrane), and thus conserves the redox energy in a proton gradient.</text>
</comment>
<comment type="catalytic activity">
    <reaction evidence="1">
        <text>a quinone + NADH + 5 H(+)(in) = a quinol + NAD(+) + 4 H(+)(out)</text>
        <dbReference type="Rhea" id="RHEA:57888"/>
        <dbReference type="ChEBI" id="CHEBI:15378"/>
        <dbReference type="ChEBI" id="CHEBI:24646"/>
        <dbReference type="ChEBI" id="CHEBI:57540"/>
        <dbReference type="ChEBI" id="CHEBI:57945"/>
        <dbReference type="ChEBI" id="CHEBI:132124"/>
    </reaction>
</comment>
<comment type="cofactor">
    <cofactor evidence="1">
        <name>[4Fe-4S] cluster</name>
        <dbReference type="ChEBI" id="CHEBI:49883"/>
    </cofactor>
    <text evidence="1">Binds 2 [4Fe-4S] clusters per subunit.</text>
</comment>
<comment type="subunit">
    <text evidence="1">NDH-1 is composed of 14 different subunits. Subunits NuoA, H, J, K, L, M, N constitute the membrane sector of the complex.</text>
</comment>
<comment type="subcellular location">
    <subcellularLocation>
        <location evidence="1">Cell inner membrane</location>
        <topology evidence="1">Peripheral membrane protein</topology>
    </subcellularLocation>
</comment>
<comment type="similarity">
    <text evidence="1">Belongs to the complex I 23 kDa subunit family.</text>
</comment>